<feature type="chain" id="PRO_1000008604" description="4-hydroxy-tetrahydrodipicolinate reductase">
    <location>
        <begin position="1"/>
        <end position="271"/>
    </location>
</feature>
<feature type="active site" description="Proton donor/acceptor" evidence="1">
    <location>
        <position position="157"/>
    </location>
</feature>
<feature type="active site" description="Proton donor" evidence="1">
    <location>
        <position position="161"/>
    </location>
</feature>
<feature type="binding site" evidence="1">
    <location>
        <begin position="8"/>
        <end position="13"/>
    </location>
    <ligand>
        <name>NAD(+)</name>
        <dbReference type="ChEBI" id="CHEBI:57540"/>
    </ligand>
</feature>
<feature type="binding site" evidence="1">
    <location>
        <position position="35"/>
    </location>
    <ligand>
        <name>NADP(+)</name>
        <dbReference type="ChEBI" id="CHEBI:58349"/>
    </ligand>
</feature>
<feature type="binding site" evidence="1">
    <location>
        <begin position="100"/>
        <end position="102"/>
    </location>
    <ligand>
        <name>NAD(+)</name>
        <dbReference type="ChEBI" id="CHEBI:57540"/>
    </ligand>
</feature>
<feature type="binding site" evidence="1">
    <location>
        <begin position="124"/>
        <end position="127"/>
    </location>
    <ligand>
        <name>NAD(+)</name>
        <dbReference type="ChEBI" id="CHEBI:57540"/>
    </ligand>
</feature>
<feature type="binding site" evidence="1">
    <location>
        <position position="158"/>
    </location>
    <ligand>
        <name>(S)-2,3,4,5-tetrahydrodipicolinate</name>
        <dbReference type="ChEBI" id="CHEBI:16845"/>
    </ligand>
</feature>
<feature type="binding site" evidence="1">
    <location>
        <begin position="167"/>
        <end position="168"/>
    </location>
    <ligand>
        <name>(S)-2,3,4,5-tetrahydrodipicolinate</name>
        <dbReference type="ChEBI" id="CHEBI:16845"/>
    </ligand>
</feature>
<gene>
    <name evidence="1" type="primary">dapB</name>
    <name type="ordered locus">MXAN_5927</name>
</gene>
<name>DAPB_MYXXD</name>
<evidence type="ECO:0000255" key="1">
    <source>
        <dbReference type="HAMAP-Rule" id="MF_00102"/>
    </source>
</evidence>
<evidence type="ECO:0000305" key="2"/>
<protein>
    <recommendedName>
        <fullName evidence="1">4-hydroxy-tetrahydrodipicolinate reductase</fullName>
        <shortName evidence="1">HTPA reductase</shortName>
        <ecNumber evidence="1">1.17.1.8</ecNumber>
    </recommendedName>
</protein>
<organism>
    <name type="scientific">Myxococcus xanthus (strain DK1622)</name>
    <dbReference type="NCBI Taxonomy" id="246197"/>
    <lineage>
        <taxon>Bacteria</taxon>
        <taxon>Pseudomonadati</taxon>
        <taxon>Myxococcota</taxon>
        <taxon>Myxococcia</taxon>
        <taxon>Myxococcales</taxon>
        <taxon>Cystobacterineae</taxon>
        <taxon>Myxococcaceae</taxon>
        <taxon>Myxococcus</taxon>
    </lineage>
</organism>
<reference key="1">
    <citation type="journal article" date="2006" name="Proc. Natl. Acad. Sci. U.S.A.">
        <title>Evolution of sensory complexity recorded in a myxobacterial genome.</title>
        <authorList>
            <person name="Goldman B.S."/>
            <person name="Nierman W.C."/>
            <person name="Kaiser D."/>
            <person name="Slater S.C."/>
            <person name="Durkin A.S."/>
            <person name="Eisen J.A."/>
            <person name="Ronning C.M."/>
            <person name="Barbazuk W.B."/>
            <person name="Blanchard M."/>
            <person name="Field C."/>
            <person name="Halling C."/>
            <person name="Hinkle G."/>
            <person name="Iartchuk O."/>
            <person name="Kim H.S."/>
            <person name="Mackenzie C."/>
            <person name="Madupu R."/>
            <person name="Miller N."/>
            <person name="Shvartsbeyn A."/>
            <person name="Sullivan S.A."/>
            <person name="Vaudin M."/>
            <person name="Wiegand R."/>
            <person name="Kaplan H.B."/>
        </authorList>
    </citation>
    <scope>NUCLEOTIDE SEQUENCE [LARGE SCALE GENOMIC DNA]</scope>
    <source>
        <strain>DK1622</strain>
    </source>
</reference>
<sequence>MIRTVITGITGRMGSTLLRLALDSGDLRVVGGTARPGSASVGQDAGVATRLGPVDVTVVDSLERALDAAQADVVIDFTSAELSVAHAKVCAARGVALVVGSTGFTPEASAALAESAKAVPIVAAPNMSVGVNLVIRMAAELARVLGPGFDVEVLEAHHRMKKDAPSGTALRLAEVLTEALGRTQEDLTFARHGQIGARPAREIGVQTLRGGDVVGEHTVYFLGEGERIELTHRATNRDQFAAGALRAARWVAGRAPGLHDMADVLGFQRTS</sequence>
<comment type="function">
    <text evidence="1">Catalyzes the conversion of 4-hydroxy-tetrahydrodipicolinate (HTPA) to tetrahydrodipicolinate.</text>
</comment>
<comment type="catalytic activity">
    <reaction evidence="1">
        <text>(S)-2,3,4,5-tetrahydrodipicolinate + NAD(+) + H2O = (2S,4S)-4-hydroxy-2,3,4,5-tetrahydrodipicolinate + NADH + H(+)</text>
        <dbReference type="Rhea" id="RHEA:35323"/>
        <dbReference type="ChEBI" id="CHEBI:15377"/>
        <dbReference type="ChEBI" id="CHEBI:15378"/>
        <dbReference type="ChEBI" id="CHEBI:16845"/>
        <dbReference type="ChEBI" id="CHEBI:57540"/>
        <dbReference type="ChEBI" id="CHEBI:57945"/>
        <dbReference type="ChEBI" id="CHEBI:67139"/>
        <dbReference type="EC" id="1.17.1.8"/>
    </reaction>
</comment>
<comment type="catalytic activity">
    <reaction evidence="1">
        <text>(S)-2,3,4,5-tetrahydrodipicolinate + NADP(+) + H2O = (2S,4S)-4-hydroxy-2,3,4,5-tetrahydrodipicolinate + NADPH + H(+)</text>
        <dbReference type="Rhea" id="RHEA:35331"/>
        <dbReference type="ChEBI" id="CHEBI:15377"/>
        <dbReference type="ChEBI" id="CHEBI:15378"/>
        <dbReference type="ChEBI" id="CHEBI:16845"/>
        <dbReference type="ChEBI" id="CHEBI:57783"/>
        <dbReference type="ChEBI" id="CHEBI:58349"/>
        <dbReference type="ChEBI" id="CHEBI:67139"/>
        <dbReference type="EC" id="1.17.1.8"/>
    </reaction>
</comment>
<comment type="pathway">
    <text evidence="1">Amino-acid biosynthesis; L-lysine biosynthesis via DAP pathway; (S)-tetrahydrodipicolinate from L-aspartate: step 4/4.</text>
</comment>
<comment type="subcellular location">
    <subcellularLocation>
        <location evidence="1">Cytoplasm</location>
    </subcellularLocation>
</comment>
<comment type="similarity">
    <text evidence="1">Belongs to the DapB family.</text>
</comment>
<comment type="caution">
    <text evidence="2">Was originally thought to be a dihydrodipicolinate reductase (DHDPR), catalyzing the conversion of dihydrodipicolinate to tetrahydrodipicolinate. However, it was shown in E.coli that the substrate of the enzymatic reaction is not dihydrodipicolinate (DHDP) but in fact (2S,4S)-4-hydroxy-2,3,4,5-tetrahydrodipicolinic acid (HTPA), the product released by the DapA-catalyzed reaction.</text>
</comment>
<keyword id="KW-0028">Amino-acid biosynthesis</keyword>
<keyword id="KW-0963">Cytoplasm</keyword>
<keyword id="KW-0220">Diaminopimelate biosynthesis</keyword>
<keyword id="KW-0457">Lysine biosynthesis</keyword>
<keyword id="KW-0520">NAD</keyword>
<keyword id="KW-0521">NADP</keyword>
<keyword id="KW-0560">Oxidoreductase</keyword>
<keyword id="KW-1185">Reference proteome</keyword>
<proteinExistence type="inferred from homology"/>
<accession>Q1CZV9</accession>
<dbReference type="EC" id="1.17.1.8" evidence="1"/>
<dbReference type="EMBL" id="CP000113">
    <property type="protein sequence ID" value="ABF90565.1"/>
    <property type="molecule type" value="Genomic_DNA"/>
</dbReference>
<dbReference type="RefSeq" id="WP_011555878.1">
    <property type="nucleotide sequence ID" value="NC_008095.1"/>
</dbReference>
<dbReference type="SMR" id="Q1CZV9"/>
<dbReference type="STRING" id="246197.MXAN_5927"/>
<dbReference type="EnsemblBacteria" id="ABF90565">
    <property type="protein sequence ID" value="ABF90565"/>
    <property type="gene ID" value="MXAN_5927"/>
</dbReference>
<dbReference type="GeneID" id="41363165"/>
<dbReference type="KEGG" id="mxa:MXAN_5927"/>
<dbReference type="eggNOG" id="COG0289">
    <property type="taxonomic scope" value="Bacteria"/>
</dbReference>
<dbReference type="HOGENOM" id="CLU_047479_2_1_7"/>
<dbReference type="OrthoDB" id="9790352at2"/>
<dbReference type="UniPathway" id="UPA00034">
    <property type="reaction ID" value="UER00018"/>
</dbReference>
<dbReference type="Proteomes" id="UP000002402">
    <property type="component" value="Chromosome"/>
</dbReference>
<dbReference type="GO" id="GO:0005829">
    <property type="term" value="C:cytosol"/>
    <property type="evidence" value="ECO:0007669"/>
    <property type="project" value="TreeGrafter"/>
</dbReference>
<dbReference type="GO" id="GO:0008839">
    <property type="term" value="F:4-hydroxy-tetrahydrodipicolinate reductase"/>
    <property type="evidence" value="ECO:0007669"/>
    <property type="project" value="UniProtKB-EC"/>
</dbReference>
<dbReference type="GO" id="GO:0051287">
    <property type="term" value="F:NAD binding"/>
    <property type="evidence" value="ECO:0007669"/>
    <property type="project" value="UniProtKB-UniRule"/>
</dbReference>
<dbReference type="GO" id="GO:0050661">
    <property type="term" value="F:NADP binding"/>
    <property type="evidence" value="ECO:0007669"/>
    <property type="project" value="UniProtKB-UniRule"/>
</dbReference>
<dbReference type="GO" id="GO:0016726">
    <property type="term" value="F:oxidoreductase activity, acting on CH or CH2 groups, NAD or NADP as acceptor"/>
    <property type="evidence" value="ECO:0007669"/>
    <property type="project" value="UniProtKB-UniRule"/>
</dbReference>
<dbReference type="GO" id="GO:0019877">
    <property type="term" value="P:diaminopimelate biosynthetic process"/>
    <property type="evidence" value="ECO:0007669"/>
    <property type="project" value="UniProtKB-UniRule"/>
</dbReference>
<dbReference type="GO" id="GO:0009089">
    <property type="term" value="P:lysine biosynthetic process via diaminopimelate"/>
    <property type="evidence" value="ECO:0007669"/>
    <property type="project" value="UniProtKB-UniRule"/>
</dbReference>
<dbReference type="CDD" id="cd02274">
    <property type="entry name" value="DHDPR_N"/>
    <property type="match status" value="1"/>
</dbReference>
<dbReference type="FunFam" id="3.30.360.10:FF:000004">
    <property type="entry name" value="4-hydroxy-tetrahydrodipicolinate reductase"/>
    <property type="match status" value="1"/>
</dbReference>
<dbReference type="Gene3D" id="3.30.360.10">
    <property type="entry name" value="Dihydrodipicolinate Reductase, domain 2"/>
    <property type="match status" value="1"/>
</dbReference>
<dbReference type="Gene3D" id="3.40.50.720">
    <property type="entry name" value="NAD(P)-binding Rossmann-like Domain"/>
    <property type="match status" value="1"/>
</dbReference>
<dbReference type="HAMAP" id="MF_00102">
    <property type="entry name" value="DapB"/>
    <property type="match status" value="1"/>
</dbReference>
<dbReference type="InterPro" id="IPR022663">
    <property type="entry name" value="DapB_C"/>
</dbReference>
<dbReference type="InterPro" id="IPR000846">
    <property type="entry name" value="DapB_N"/>
</dbReference>
<dbReference type="InterPro" id="IPR022664">
    <property type="entry name" value="DapB_N_CS"/>
</dbReference>
<dbReference type="InterPro" id="IPR023940">
    <property type="entry name" value="DHDPR_bac"/>
</dbReference>
<dbReference type="InterPro" id="IPR036291">
    <property type="entry name" value="NAD(P)-bd_dom_sf"/>
</dbReference>
<dbReference type="NCBIfam" id="TIGR00036">
    <property type="entry name" value="dapB"/>
    <property type="match status" value="1"/>
</dbReference>
<dbReference type="PANTHER" id="PTHR20836:SF0">
    <property type="entry name" value="4-HYDROXY-TETRAHYDRODIPICOLINATE REDUCTASE 1, CHLOROPLASTIC-RELATED"/>
    <property type="match status" value="1"/>
</dbReference>
<dbReference type="PANTHER" id="PTHR20836">
    <property type="entry name" value="DIHYDRODIPICOLINATE REDUCTASE"/>
    <property type="match status" value="1"/>
</dbReference>
<dbReference type="Pfam" id="PF05173">
    <property type="entry name" value="DapB_C"/>
    <property type="match status" value="1"/>
</dbReference>
<dbReference type="Pfam" id="PF01113">
    <property type="entry name" value="DapB_N"/>
    <property type="match status" value="1"/>
</dbReference>
<dbReference type="PIRSF" id="PIRSF000161">
    <property type="entry name" value="DHPR"/>
    <property type="match status" value="1"/>
</dbReference>
<dbReference type="SUPFAM" id="SSF55347">
    <property type="entry name" value="Glyceraldehyde-3-phosphate dehydrogenase-like, C-terminal domain"/>
    <property type="match status" value="1"/>
</dbReference>
<dbReference type="SUPFAM" id="SSF51735">
    <property type="entry name" value="NAD(P)-binding Rossmann-fold domains"/>
    <property type="match status" value="1"/>
</dbReference>
<dbReference type="PROSITE" id="PS01298">
    <property type="entry name" value="DAPB"/>
    <property type="match status" value="1"/>
</dbReference>